<evidence type="ECO:0000255" key="1">
    <source>
        <dbReference type="HAMAP-Rule" id="MF_01371"/>
    </source>
</evidence>
<evidence type="ECO:0000305" key="2"/>
<accession>A7N9U3</accession>
<comment type="subunit">
    <text evidence="1">Part of the 50S ribosomal subunit.</text>
</comment>
<comment type="similarity">
    <text evidence="1">Belongs to the universal ribosomal protein uL30 family.</text>
</comment>
<dbReference type="EMBL" id="CP000803">
    <property type="protein sequence ID" value="ABU60746.1"/>
    <property type="molecule type" value="Genomic_DNA"/>
</dbReference>
<dbReference type="RefSeq" id="WP_003014363.1">
    <property type="nucleotide sequence ID" value="NC_009749.1"/>
</dbReference>
<dbReference type="SMR" id="A7N9U3"/>
<dbReference type="GeneID" id="75264243"/>
<dbReference type="KEGG" id="fta:FTA_0269"/>
<dbReference type="HOGENOM" id="CLU_131047_1_4_6"/>
<dbReference type="GO" id="GO:0022625">
    <property type="term" value="C:cytosolic large ribosomal subunit"/>
    <property type="evidence" value="ECO:0007669"/>
    <property type="project" value="TreeGrafter"/>
</dbReference>
<dbReference type="GO" id="GO:0003735">
    <property type="term" value="F:structural constituent of ribosome"/>
    <property type="evidence" value="ECO:0007669"/>
    <property type="project" value="InterPro"/>
</dbReference>
<dbReference type="GO" id="GO:0006412">
    <property type="term" value="P:translation"/>
    <property type="evidence" value="ECO:0007669"/>
    <property type="project" value="UniProtKB-UniRule"/>
</dbReference>
<dbReference type="CDD" id="cd01658">
    <property type="entry name" value="Ribosomal_L30"/>
    <property type="match status" value="1"/>
</dbReference>
<dbReference type="FunFam" id="3.30.1390.20:FF:000001">
    <property type="entry name" value="50S ribosomal protein L30"/>
    <property type="match status" value="1"/>
</dbReference>
<dbReference type="Gene3D" id="3.30.1390.20">
    <property type="entry name" value="Ribosomal protein L30, ferredoxin-like fold domain"/>
    <property type="match status" value="1"/>
</dbReference>
<dbReference type="HAMAP" id="MF_01371_B">
    <property type="entry name" value="Ribosomal_uL30_B"/>
    <property type="match status" value="1"/>
</dbReference>
<dbReference type="InterPro" id="IPR036919">
    <property type="entry name" value="Ribo_uL30_ferredoxin-like_sf"/>
</dbReference>
<dbReference type="InterPro" id="IPR005996">
    <property type="entry name" value="Ribosomal_uL30_bac-type"/>
</dbReference>
<dbReference type="InterPro" id="IPR016082">
    <property type="entry name" value="Ribosomal_uL30_ferredoxin-like"/>
</dbReference>
<dbReference type="NCBIfam" id="TIGR01308">
    <property type="entry name" value="rpmD_bact"/>
    <property type="match status" value="1"/>
</dbReference>
<dbReference type="PANTHER" id="PTHR15892:SF2">
    <property type="entry name" value="LARGE RIBOSOMAL SUBUNIT PROTEIN UL30M"/>
    <property type="match status" value="1"/>
</dbReference>
<dbReference type="PANTHER" id="PTHR15892">
    <property type="entry name" value="MITOCHONDRIAL RIBOSOMAL PROTEIN L30"/>
    <property type="match status" value="1"/>
</dbReference>
<dbReference type="Pfam" id="PF00327">
    <property type="entry name" value="Ribosomal_L30"/>
    <property type="match status" value="1"/>
</dbReference>
<dbReference type="PIRSF" id="PIRSF002211">
    <property type="entry name" value="Ribosomal_L30_bac-type"/>
    <property type="match status" value="1"/>
</dbReference>
<dbReference type="SUPFAM" id="SSF55129">
    <property type="entry name" value="Ribosomal protein L30p/L7e"/>
    <property type="match status" value="1"/>
</dbReference>
<feature type="chain" id="PRO_1000056041" description="Large ribosomal subunit protein uL30">
    <location>
        <begin position="1"/>
        <end position="61"/>
    </location>
</feature>
<organism>
    <name type="scientific">Francisella tularensis subsp. holarctica (strain FTNF002-00 / FTA)</name>
    <dbReference type="NCBI Taxonomy" id="458234"/>
    <lineage>
        <taxon>Bacteria</taxon>
        <taxon>Pseudomonadati</taxon>
        <taxon>Pseudomonadota</taxon>
        <taxon>Gammaproteobacteria</taxon>
        <taxon>Thiotrichales</taxon>
        <taxon>Francisellaceae</taxon>
        <taxon>Francisella</taxon>
    </lineage>
</organism>
<reference key="1">
    <citation type="journal article" date="2009" name="PLoS ONE">
        <title>Complete genome sequence of Francisella tularensis subspecies holarctica FTNF002-00.</title>
        <authorList>
            <person name="Barabote R.D."/>
            <person name="Xie G."/>
            <person name="Brettin T.S."/>
            <person name="Hinrichs S.H."/>
            <person name="Fey P.D."/>
            <person name="Jay J.J."/>
            <person name="Engle J.L."/>
            <person name="Godbole S.D."/>
            <person name="Noronha J.M."/>
            <person name="Scheuermann R.H."/>
            <person name="Zhou L.W."/>
            <person name="Lion C."/>
            <person name="Dempsey M.P."/>
        </authorList>
    </citation>
    <scope>NUCLEOTIDE SEQUENCE [LARGE SCALE GENOMIC DNA]</scope>
    <source>
        <strain>FTNF002-00 / FTA</strain>
    </source>
</reference>
<name>RL30_FRATF</name>
<proteinExistence type="inferred from homology"/>
<keyword id="KW-0687">Ribonucleoprotein</keyword>
<keyword id="KW-0689">Ribosomal protein</keyword>
<sequence>MTQAKTFKVTLVKSLIGRKENHIASARGLGLRKINHTVEVLDTPENRGMANKIYYMVKIEG</sequence>
<gene>
    <name evidence="1" type="primary">rpmD</name>
    <name type="ordered locus">FTA_0269</name>
</gene>
<protein>
    <recommendedName>
        <fullName evidence="1">Large ribosomal subunit protein uL30</fullName>
    </recommendedName>
    <alternativeName>
        <fullName evidence="2">50S ribosomal protein L30</fullName>
    </alternativeName>
</protein>